<reference evidence="10 13" key="1">
    <citation type="journal article" date="2000" name="Nat. Genet.">
        <title>Mutations in a new gene in Ellis-van Creveld syndrome and Weyers acrodental dysostosis.</title>
        <authorList>
            <person name="Ruiz-Perez V.L."/>
            <person name="Ide S.E."/>
            <person name="Strom T.M."/>
            <person name="Lorenz B."/>
            <person name="Wilson D."/>
            <person name="Woods K."/>
            <person name="King L."/>
            <person name="Francomano C."/>
            <person name="Freisinger P."/>
            <person name="Spranger S."/>
            <person name="Marino B."/>
            <person name="Dallapiccola B."/>
            <person name="Wright M."/>
            <person name="Meitinger T."/>
            <person name="Polymeropoulos M.H."/>
            <person name="Goodship J."/>
        </authorList>
    </citation>
    <scope>NUCLEOTIDE SEQUENCE [MRNA] (ISOFORM 1)</scope>
    <source>
        <tissue evidence="13">Brain</tissue>
    </source>
</reference>
<reference evidence="10 12" key="2">
    <citation type="journal article" date="2003" name="Genome Res.">
        <title>The secreted protein discovery initiative (SPDI), a large-scale effort to identify novel human secreted and transmembrane proteins: a bioinformatics assessment.</title>
        <authorList>
            <person name="Clark H.F."/>
            <person name="Gurney A.L."/>
            <person name="Abaya E."/>
            <person name="Baker K."/>
            <person name="Baldwin D.T."/>
            <person name="Brush J."/>
            <person name="Chen J."/>
            <person name="Chow B."/>
            <person name="Chui C."/>
            <person name="Crowley C."/>
            <person name="Currell B."/>
            <person name="Deuel B."/>
            <person name="Dowd P."/>
            <person name="Eaton D."/>
            <person name="Foster J.S."/>
            <person name="Grimaldi C."/>
            <person name="Gu Q."/>
            <person name="Hass P.E."/>
            <person name="Heldens S."/>
            <person name="Huang A."/>
            <person name="Kim H.S."/>
            <person name="Klimowski L."/>
            <person name="Jin Y."/>
            <person name="Johnson S."/>
            <person name="Lee J."/>
            <person name="Lewis L."/>
            <person name="Liao D."/>
            <person name="Mark M.R."/>
            <person name="Robbie E."/>
            <person name="Sanchez C."/>
            <person name="Schoenfeld J."/>
            <person name="Seshagiri S."/>
            <person name="Simmons L."/>
            <person name="Singh J."/>
            <person name="Smith V."/>
            <person name="Stinson J."/>
            <person name="Vagts A."/>
            <person name="Vandlen R.L."/>
            <person name="Watanabe C."/>
            <person name="Wieand D."/>
            <person name="Woods K."/>
            <person name="Xie M.-H."/>
            <person name="Yansura D.G."/>
            <person name="Yi S."/>
            <person name="Yu G."/>
            <person name="Yuan J."/>
            <person name="Zhang M."/>
            <person name="Zhang Z."/>
            <person name="Goddard A.D."/>
            <person name="Wood W.I."/>
            <person name="Godowski P.J."/>
            <person name="Gray A.M."/>
        </authorList>
    </citation>
    <scope>NUCLEOTIDE SEQUENCE [LARGE SCALE MRNA] (ISOFORM 2)</scope>
</reference>
<reference evidence="10 11" key="3">
    <citation type="journal article" date="2004" name="Genome Res.">
        <title>The status, quality, and expansion of the NIH full-length cDNA project: the Mammalian Gene Collection (MGC).</title>
        <authorList>
            <consortium name="The MGC Project Team"/>
        </authorList>
    </citation>
    <scope>NUCLEOTIDE SEQUENCE [LARGE SCALE MRNA] (ISOFORM 1)</scope>
    <scope>VARIANT GLY-198</scope>
    <source>
        <tissue evidence="11">Brain</tissue>
    </source>
</reference>
<reference evidence="10" key="4">
    <citation type="journal article" date="2002" name="Science">
        <title>The protein kinase complement of the human genome.</title>
        <authorList>
            <person name="Manning G."/>
            <person name="Whyte D.B."/>
            <person name="Martinez R."/>
            <person name="Hunter T."/>
            <person name="Sudarsanam S."/>
        </authorList>
    </citation>
    <scope>NOMENCLATURE</scope>
</reference>
<reference key="5">
    <citation type="journal article" date="2007" name="Nature">
        <title>Patterns of somatic mutation in human cancer genomes.</title>
        <authorList>
            <person name="Greenman C."/>
            <person name="Stephens P."/>
            <person name="Smith R."/>
            <person name="Dalgliesh G.L."/>
            <person name="Hunter C."/>
            <person name="Bignell G."/>
            <person name="Davies H."/>
            <person name="Teague J."/>
            <person name="Butler A."/>
            <person name="Stevens C."/>
            <person name="Edkins S."/>
            <person name="O'Meara S."/>
            <person name="Vastrik I."/>
            <person name="Schmidt E.E."/>
            <person name="Avis T."/>
            <person name="Barthorpe S."/>
            <person name="Bhamra G."/>
            <person name="Buck G."/>
            <person name="Choudhury B."/>
            <person name="Clements J."/>
            <person name="Cole J."/>
            <person name="Dicks E."/>
            <person name="Forbes S."/>
            <person name="Gray K."/>
            <person name="Halliday K."/>
            <person name="Harrison R."/>
            <person name="Hills K."/>
            <person name="Hinton J."/>
            <person name="Jenkinson A."/>
            <person name="Jones D."/>
            <person name="Menzies A."/>
            <person name="Mironenko T."/>
            <person name="Perry J."/>
            <person name="Raine K."/>
            <person name="Richardson D."/>
            <person name="Shepherd R."/>
            <person name="Small A."/>
            <person name="Tofts C."/>
            <person name="Varian J."/>
            <person name="Webb T."/>
            <person name="West S."/>
            <person name="Widaa S."/>
            <person name="Yates A."/>
            <person name="Cahill D.P."/>
            <person name="Louis D.N."/>
            <person name="Goldstraw P."/>
            <person name="Nicholson A.G."/>
            <person name="Brasseur F."/>
            <person name="Looijenga L."/>
            <person name="Weber B.L."/>
            <person name="Chiew Y.-E."/>
            <person name="DeFazio A."/>
            <person name="Greaves M.F."/>
            <person name="Green A.R."/>
            <person name="Campbell P."/>
            <person name="Birney E."/>
            <person name="Easton D.F."/>
            <person name="Chenevix-Trench G."/>
            <person name="Tan M.-H."/>
            <person name="Khoo S.K."/>
            <person name="Teh B.T."/>
            <person name="Yuen S.T."/>
            <person name="Leung S.Y."/>
            <person name="Wooster R."/>
            <person name="Futreal P.A."/>
            <person name="Stratton M.R."/>
        </authorList>
    </citation>
    <scope>VARIANTS [LARGE SCALE ANALYSIS] GLU-35; GLY-198; HIS-244; VAL-310 AND THR-342</scope>
</reference>
<protein>
    <recommendedName>
        <fullName>Serine/threonine-protein kinase 32B</fullName>
        <ecNumber>2.7.11.1</ecNumber>
    </recommendedName>
    <alternativeName>
        <fullName>Yet another novel kinase 2</fullName>
    </alternativeName>
</protein>
<gene>
    <name evidence="11" type="primary">STK32B</name>
    <name type="synonym">YANK2</name>
    <name type="ORF">UNQ3003/PRO9744</name>
</gene>
<sequence>MGGNHSHKPPVFDENEEVNFDHFQILRAIGKGSFGKVCIVQKRDTKKMYAMKYMNKQKCIERDEVRNVFRELQIMQGLEHPFLVNLWYSFQDEEDMFMVVDLLLGGDLRYHLQQNVHFTEGTVKLYICELALALEYLQRYHIIHRDIKPDNILLDEHGHVHITDFNIATVVKGAERASSMAGTKPYMAPEVFQVYMDRGPGYSYPVDWWSLGITAYELLRGWRPYEIHSVTPIDEILNMFKVERVHYSSTWCKGMVALLRKLLTKDPESRVSSLHDIQSVPYLADMNWDAVFKKALMPGFVPNKGRLNCDPTFELEEMILESKPLHKKKKRLAKNRSRDGTKDSCPLNGHLQHCLETVREEFIIFNREKLRRQQGQGSQLLDTDSRGGGQAQSKLQDGCNNNLLTHTCTRGCSS</sequence>
<keyword id="KW-0025">Alternative splicing</keyword>
<keyword id="KW-0067">ATP-binding</keyword>
<keyword id="KW-0418">Kinase</keyword>
<keyword id="KW-0460">Magnesium</keyword>
<keyword id="KW-0479">Metal-binding</keyword>
<keyword id="KW-0547">Nucleotide-binding</keyword>
<keyword id="KW-1267">Proteomics identification</keyword>
<keyword id="KW-1185">Reference proteome</keyword>
<keyword id="KW-0723">Serine/threonine-protein kinase</keyword>
<keyword id="KW-0808">Transferase</keyword>
<proteinExistence type="evidence at protein level"/>
<feature type="chain" id="PRO_0000232413" description="Serine/threonine-protein kinase 32B">
    <location>
        <begin position="1"/>
        <end position="414"/>
    </location>
</feature>
<feature type="domain" description="Protein kinase" evidence="2">
    <location>
        <begin position="23"/>
        <end position="283"/>
    </location>
</feature>
<feature type="region of interest" description="Disordered" evidence="4">
    <location>
        <begin position="374"/>
        <end position="396"/>
    </location>
</feature>
<feature type="active site" description="Proton acceptor" evidence="1 2 3">
    <location>
        <position position="146"/>
    </location>
</feature>
<feature type="binding site" evidence="1 2">
    <location>
        <begin position="29"/>
        <end position="37"/>
    </location>
    <ligand>
        <name>ATP</name>
        <dbReference type="ChEBI" id="CHEBI:30616"/>
    </ligand>
</feature>
<feature type="binding site" evidence="1 2">
    <location>
        <position position="52"/>
    </location>
    <ligand>
        <name>ATP</name>
        <dbReference type="ChEBI" id="CHEBI:30616"/>
    </ligand>
</feature>
<feature type="splice variant" id="VSP_051997" description="In isoform 2." evidence="9">
    <location>
        <begin position="1"/>
        <end position="47"/>
    </location>
</feature>
<feature type="sequence variant" id="VAR_041166" description="In a metastatic melanoma sample; somatic mutation." evidence="8">
    <original>G</original>
    <variation>E</variation>
    <location>
        <position position="35"/>
    </location>
</feature>
<feature type="sequence variant" id="VAR_025899" description="In dbSNP:rs3733182." evidence="7 8">
    <original>R</original>
    <variation>G</variation>
    <location>
        <position position="198"/>
    </location>
</feature>
<feature type="sequence variant" id="VAR_041167" description="In dbSNP:rs35207488." evidence="8">
    <original>R</original>
    <variation>H</variation>
    <location>
        <position position="244"/>
    </location>
</feature>
<feature type="sequence variant" id="VAR_041168" description="In dbSNP:rs56259884." evidence="8">
    <original>D</original>
    <variation>V</variation>
    <location>
        <position position="310"/>
    </location>
</feature>
<feature type="sequence variant" id="VAR_041169" description="In dbSNP:rs55961955." evidence="8">
    <original>K</original>
    <variation>T</variation>
    <location>
        <position position="342"/>
    </location>
</feature>
<evidence type="ECO:0000250" key="1">
    <source>
        <dbReference type="UniProtKB" id="Q60592"/>
    </source>
</evidence>
<evidence type="ECO:0000255" key="2">
    <source>
        <dbReference type="PROSITE-ProRule" id="PRU00159"/>
    </source>
</evidence>
<evidence type="ECO:0000255" key="3">
    <source>
        <dbReference type="PROSITE-ProRule" id="PRU10027"/>
    </source>
</evidence>
<evidence type="ECO:0000256" key="4">
    <source>
        <dbReference type="SAM" id="MobiDB-lite"/>
    </source>
</evidence>
<evidence type="ECO:0000269" key="5">
    <source>
    </source>
</evidence>
<evidence type="ECO:0000269" key="6">
    <source>
    </source>
</evidence>
<evidence type="ECO:0000269" key="7">
    <source>
    </source>
</evidence>
<evidence type="ECO:0000269" key="8">
    <source>
    </source>
</evidence>
<evidence type="ECO:0000303" key="9">
    <source>
    </source>
</evidence>
<evidence type="ECO:0000305" key="10"/>
<evidence type="ECO:0000312" key="11">
    <source>
        <dbReference type="EMBL" id="AAH38238.1"/>
    </source>
</evidence>
<evidence type="ECO:0000312" key="12">
    <source>
        <dbReference type="EMBL" id="AAQ88719.1"/>
    </source>
</evidence>
<evidence type="ECO:0000312" key="13">
    <source>
        <dbReference type="EMBL" id="CAB76471.1"/>
    </source>
</evidence>
<accession>Q9NY57</accession>
<accession>Q6UXH3</accession>
<accession>Q8IY14</accession>
<dbReference type="EC" id="2.7.11.1"/>
<dbReference type="EMBL" id="AJ250839">
    <property type="protein sequence ID" value="CAB76471.1"/>
    <property type="molecule type" value="mRNA"/>
</dbReference>
<dbReference type="EMBL" id="AY358353">
    <property type="protein sequence ID" value="AAQ88719.1"/>
    <property type="status" value="ALT_INIT"/>
    <property type="molecule type" value="mRNA"/>
</dbReference>
<dbReference type="EMBL" id="BC038238">
    <property type="protein sequence ID" value="AAH38238.1"/>
    <property type="molecule type" value="mRNA"/>
</dbReference>
<dbReference type="CCDS" id="CCDS3380.1">
    <molecule id="Q9NY57-1"/>
</dbReference>
<dbReference type="CCDS" id="CCDS77895.1">
    <molecule id="Q9NY57-2"/>
</dbReference>
<dbReference type="RefSeq" id="NP_001293011.1">
    <molecule id="Q9NY57-2"/>
    <property type="nucleotide sequence ID" value="NM_001306082.2"/>
</dbReference>
<dbReference type="RefSeq" id="NP_060871.1">
    <molecule id="Q9NY57-1"/>
    <property type="nucleotide sequence ID" value="NM_018401.3"/>
</dbReference>
<dbReference type="RefSeq" id="XP_024309899.1">
    <molecule id="Q9NY57-2"/>
    <property type="nucleotide sequence ID" value="XM_024454131.2"/>
</dbReference>
<dbReference type="RefSeq" id="XP_047271882.1">
    <molecule id="Q9NY57-2"/>
    <property type="nucleotide sequence ID" value="XM_047415926.1"/>
</dbReference>
<dbReference type="RefSeq" id="XP_054206416.1">
    <molecule id="Q9NY57-2"/>
    <property type="nucleotide sequence ID" value="XM_054350441.1"/>
</dbReference>
<dbReference type="RefSeq" id="XP_054206418.1">
    <molecule id="Q9NY57-2"/>
    <property type="nucleotide sequence ID" value="XM_054350443.1"/>
</dbReference>
<dbReference type="SMR" id="Q9NY57"/>
<dbReference type="BioGRID" id="120631">
    <property type="interactions" value="14"/>
</dbReference>
<dbReference type="FunCoup" id="Q9NY57">
    <property type="interactions" value="732"/>
</dbReference>
<dbReference type="IntAct" id="Q9NY57">
    <property type="interactions" value="15"/>
</dbReference>
<dbReference type="MINT" id="Q9NY57"/>
<dbReference type="STRING" id="9606.ENSP00000282908"/>
<dbReference type="BindingDB" id="Q9NY57"/>
<dbReference type="ChEMBL" id="CHEMBL5912"/>
<dbReference type="DrugCentral" id="Q9NY57"/>
<dbReference type="iPTMnet" id="Q9NY57"/>
<dbReference type="PhosphoSitePlus" id="Q9NY57"/>
<dbReference type="BioMuta" id="STK32B"/>
<dbReference type="DMDM" id="74761811"/>
<dbReference type="CPTAC" id="non-CPTAC-5633"/>
<dbReference type="jPOST" id="Q9NY57"/>
<dbReference type="MassIVE" id="Q9NY57"/>
<dbReference type="PaxDb" id="9606-ENSP00000282908"/>
<dbReference type="PeptideAtlas" id="Q9NY57"/>
<dbReference type="ProteomicsDB" id="83178">
    <molecule id="Q9NY57-1"/>
</dbReference>
<dbReference type="ProteomicsDB" id="83179">
    <molecule id="Q9NY57-2"/>
</dbReference>
<dbReference type="Pumba" id="Q9NY57"/>
<dbReference type="Antibodypedia" id="9281">
    <property type="antibodies" value="124 antibodies from 23 providers"/>
</dbReference>
<dbReference type="DNASU" id="55351"/>
<dbReference type="Ensembl" id="ENST00000282908.10">
    <molecule id="Q9NY57-1"/>
    <property type="protein sequence ID" value="ENSP00000282908.5"/>
    <property type="gene ID" value="ENSG00000152953.13"/>
</dbReference>
<dbReference type="Ensembl" id="ENST00000510398.1">
    <molecule id="Q9NY57-2"/>
    <property type="protein sequence ID" value="ENSP00000420984.1"/>
    <property type="gene ID" value="ENSG00000152953.13"/>
</dbReference>
<dbReference type="GeneID" id="55351"/>
<dbReference type="KEGG" id="hsa:55351"/>
<dbReference type="MANE-Select" id="ENST00000282908.10">
    <property type="protein sequence ID" value="ENSP00000282908.5"/>
    <property type="RefSeq nucleotide sequence ID" value="NM_018401.3"/>
    <property type="RefSeq protein sequence ID" value="NP_060871.1"/>
</dbReference>
<dbReference type="UCSC" id="uc003gih.2">
    <molecule id="Q9NY57-1"/>
    <property type="organism name" value="human"/>
</dbReference>
<dbReference type="AGR" id="HGNC:14217"/>
<dbReference type="CTD" id="55351"/>
<dbReference type="DisGeNET" id="55351"/>
<dbReference type="GeneCards" id="STK32B"/>
<dbReference type="HGNC" id="HGNC:14217">
    <property type="gene designation" value="STK32B"/>
</dbReference>
<dbReference type="HPA" id="ENSG00000152953">
    <property type="expression patterns" value="Tissue enhanced (kidney, lymphoid tissue)"/>
</dbReference>
<dbReference type="MalaCards" id="STK32B"/>
<dbReference type="neXtProt" id="NX_Q9NY57"/>
<dbReference type="OpenTargets" id="ENSG00000152953"/>
<dbReference type="PharmGKB" id="PA128394683"/>
<dbReference type="VEuPathDB" id="HostDB:ENSG00000152953"/>
<dbReference type="eggNOG" id="KOG0598">
    <property type="taxonomic scope" value="Eukaryota"/>
</dbReference>
<dbReference type="GeneTree" id="ENSGT00940000160490"/>
<dbReference type="HOGENOM" id="CLU_000288_63_5_1"/>
<dbReference type="InParanoid" id="Q9NY57"/>
<dbReference type="OMA" id="QKCVERD"/>
<dbReference type="OrthoDB" id="354826at2759"/>
<dbReference type="PAN-GO" id="Q9NY57">
    <property type="GO annotations" value="3 GO annotations based on evolutionary models"/>
</dbReference>
<dbReference type="PhylomeDB" id="Q9NY57"/>
<dbReference type="TreeFam" id="TF313395"/>
<dbReference type="PathwayCommons" id="Q9NY57"/>
<dbReference type="SignaLink" id="Q9NY57"/>
<dbReference type="BioGRID-ORCS" id="55351">
    <property type="hits" value="10 hits in 1183 CRISPR screens"/>
</dbReference>
<dbReference type="ChiTaRS" id="STK32B">
    <property type="organism name" value="human"/>
</dbReference>
<dbReference type="GenomeRNAi" id="55351"/>
<dbReference type="Pharos" id="Q9NY57">
    <property type="development level" value="Tchem"/>
</dbReference>
<dbReference type="PRO" id="PR:Q9NY57"/>
<dbReference type="Proteomes" id="UP000005640">
    <property type="component" value="Chromosome 4"/>
</dbReference>
<dbReference type="RNAct" id="Q9NY57">
    <property type="molecule type" value="protein"/>
</dbReference>
<dbReference type="Bgee" id="ENSG00000152953">
    <property type="expression patterns" value="Expressed in secondary oocyte and 111 other cell types or tissues"/>
</dbReference>
<dbReference type="ExpressionAtlas" id="Q9NY57">
    <property type="expression patterns" value="baseline and differential"/>
</dbReference>
<dbReference type="GO" id="GO:0005524">
    <property type="term" value="F:ATP binding"/>
    <property type="evidence" value="ECO:0007669"/>
    <property type="project" value="UniProtKB-KW"/>
</dbReference>
<dbReference type="GO" id="GO:0046872">
    <property type="term" value="F:metal ion binding"/>
    <property type="evidence" value="ECO:0007669"/>
    <property type="project" value="UniProtKB-KW"/>
</dbReference>
<dbReference type="GO" id="GO:0106310">
    <property type="term" value="F:protein serine kinase activity"/>
    <property type="evidence" value="ECO:0007669"/>
    <property type="project" value="RHEA"/>
</dbReference>
<dbReference type="GO" id="GO:0004674">
    <property type="term" value="F:protein serine/threonine kinase activity"/>
    <property type="evidence" value="ECO:0000318"/>
    <property type="project" value="GO_Central"/>
</dbReference>
<dbReference type="GO" id="GO:0035556">
    <property type="term" value="P:intracellular signal transduction"/>
    <property type="evidence" value="ECO:0000318"/>
    <property type="project" value="GO_Central"/>
</dbReference>
<dbReference type="CDD" id="cd05578">
    <property type="entry name" value="STKc_Yank1"/>
    <property type="match status" value="1"/>
</dbReference>
<dbReference type="FunFam" id="3.30.200.20:FF:000158">
    <property type="entry name" value="Serine/threonine-protein kinase 32A"/>
    <property type="match status" value="1"/>
</dbReference>
<dbReference type="FunFam" id="1.10.510.10:FF:000676">
    <property type="entry name" value="serine/threonine-protein kinase 32B isoform X2"/>
    <property type="match status" value="1"/>
</dbReference>
<dbReference type="FunFam" id="1.10.510.10:FF:000735">
    <property type="entry name" value="serine/threonine-protein kinase 32B isoform X2"/>
    <property type="match status" value="1"/>
</dbReference>
<dbReference type="FunFam" id="3.30.200.20:FF:000160">
    <property type="entry name" value="Serine/threonine-protein kinase 32C"/>
    <property type="match status" value="1"/>
</dbReference>
<dbReference type="Gene3D" id="3.30.200.20">
    <property type="entry name" value="Phosphorylase Kinase, domain 1"/>
    <property type="match status" value="2"/>
</dbReference>
<dbReference type="Gene3D" id="1.10.510.10">
    <property type="entry name" value="Transferase(Phosphotransferase) domain 1"/>
    <property type="match status" value="1"/>
</dbReference>
<dbReference type="InterPro" id="IPR011009">
    <property type="entry name" value="Kinase-like_dom_sf"/>
</dbReference>
<dbReference type="InterPro" id="IPR000719">
    <property type="entry name" value="Prot_kinase_dom"/>
</dbReference>
<dbReference type="InterPro" id="IPR017441">
    <property type="entry name" value="Protein_kinase_ATP_BS"/>
</dbReference>
<dbReference type="InterPro" id="IPR008271">
    <property type="entry name" value="Ser/Thr_kinase_AS"/>
</dbReference>
<dbReference type="PANTHER" id="PTHR24355">
    <property type="entry name" value="G PROTEIN-COUPLED RECEPTOR KINASE/RIBOSOMAL PROTEIN S6 KINASE"/>
    <property type="match status" value="1"/>
</dbReference>
<dbReference type="PANTHER" id="PTHR24355:SF33">
    <property type="entry name" value="SERINE_THREONINE KINASE 32B"/>
    <property type="match status" value="1"/>
</dbReference>
<dbReference type="Pfam" id="PF00069">
    <property type="entry name" value="Pkinase"/>
    <property type="match status" value="1"/>
</dbReference>
<dbReference type="SMART" id="SM00220">
    <property type="entry name" value="S_TKc"/>
    <property type="match status" value="1"/>
</dbReference>
<dbReference type="SUPFAM" id="SSF56112">
    <property type="entry name" value="Protein kinase-like (PK-like)"/>
    <property type="match status" value="1"/>
</dbReference>
<dbReference type="PROSITE" id="PS00107">
    <property type="entry name" value="PROTEIN_KINASE_ATP"/>
    <property type="match status" value="1"/>
</dbReference>
<dbReference type="PROSITE" id="PS50011">
    <property type="entry name" value="PROTEIN_KINASE_DOM"/>
    <property type="match status" value="1"/>
</dbReference>
<dbReference type="PROSITE" id="PS00108">
    <property type="entry name" value="PROTEIN_KINASE_ST"/>
    <property type="match status" value="1"/>
</dbReference>
<name>ST32B_HUMAN</name>
<comment type="catalytic activity">
    <reaction evidence="1">
        <text>L-seryl-[protein] + ATP = O-phospho-L-seryl-[protein] + ADP + H(+)</text>
        <dbReference type="Rhea" id="RHEA:17989"/>
        <dbReference type="Rhea" id="RHEA-COMP:9863"/>
        <dbReference type="Rhea" id="RHEA-COMP:11604"/>
        <dbReference type="ChEBI" id="CHEBI:15378"/>
        <dbReference type="ChEBI" id="CHEBI:29999"/>
        <dbReference type="ChEBI" id="CHEBI:30616"/>
        <dbReference type="ChEBI" id="CHEBI:83421"/>
        <dbReference type="ChEBI" id="CHEBI:456216"/>
        <dbReference type="EC" id="2.7.11.1"/>
    </reaction>
</comment>
<comment type="catalytic activity">
    <reaction evidence="1">
        <text>L-threonyl-[protein] + ATP = O-phospho-L-threonyl-[protein] + ADP + H(+)</text>
        <dbReference type="Rhea" id="RHEA:46608"/>
        <dbReference type="Rhea" id="RHEA-COMP:11060"/>
        <dbReference type="Rhea" id="RHEA-COMP:11605"/>
        <dbReference type="ChEBI" id="CHEBI:15378"/>
        <dbReference type="ChEBI" id="CHEBI:30013"/>
        <dbReference type="ChEBI" id="CHEBI:30616"/>
        <dbReference type="ChEBI" id="CHEBI:61977"/>
        <dbReference type="ChEBI" id="CHEBI:456216"/>
        <dbReference type="EC" id="2.7.11.1"/>
    </reaction>
</comment>
<comment type="cofactor">
    <cofactor evidence="1">
        <name>Mg(2+)</name>
        <dbReference type="ChEBI" id="CHEBI:18420"/>
    </cofactor>
</comment>
<comment type="alternative products">
    <event type="alternative splicing"/>
    <isoform>
        <id>Q9NY57-1</id>
        <name evidence="5 7">1</name>
        <sequence type="displayed"/>
    </isoform>
    <isoform>
        <id>Q9NY57-2</id>
        <name evidence="6">2</name>
        <sequence type="described" ref="VSP_051997"/>
    </isoform>
</comment>
<comment type="miscellaneous">
    <molecule>Isoform 2</molecule>
    <text evidence="10">It is unsure whether Met-1 or Met-3 is the initiator.</text>
</comment>
<comment type="similarity">
    <text evidence="2">Belongs to the protein kinase superfamily. Ser/Thr protein kinase family.</text>
</comment>
<comment type="sequence caution" evidence="10">
    <conflict type="erroneous initiation">
        <sequence resource="EMBL-CDS" id="AAQ88719"/>
    </conflict>
</comment>
<organism>
    <name type="scientific">Homo sapiens</name>
    <name type="common">Human</name>
    <dbReference type="NCBI Taxonomy" id="9606"/>
    <lineage>
        <taxon>Eukaryota</taxon>
        <taxon>Metazoa</taxon>
        <taxon>Chordata</taxon>
        <taxon>Craniata</taxon>
        <taxon>Vertebrata</taxon>
        <taxon>Euteleostomi</taxon>
        <taxon>Mammalia</taxon>
        <taxon>Eutheria</taxon>
        <taxon>Euarchontoglires</taxon>
        <taxon>Primates</taxon>
        <taxon>Haplorrhini</taxon>
        <taxon>Catarrhini</taxon>
        <taxon>Hominidae</taxon>
        <taxon>Homo</taxon>
    </lineage>
</organism>